<comment type="function">
    <text evidence="4">Transcription factor specifically required to repress retrotransposons in embryonic stem cells. Recognizes and binds retroviral DNA sequences from a large subset of mammalian retroviruses and retroelements and repress their expression by recruiting a repressive complex containing TRIM28/KAP1 (PubMed:19270682).</text>
</comment>
<comment type="subcellular location">
    <subcellularLocation>
        <location evidence="5">Nucleus</location>
    </subcellularLocation>
</comment>
<comment type="alternative products">
    <event type="alternative splicing"/>
    <isoform>
        <id>G3X9G7-1</id>
        <name>1</name>
        <sequence type="displayed"/>
    </isoform>
    <isoform>
        <id>G3X9G7-2</id>
        <name>2</name>
        <sequence type="described" ref="VSP_057362 VSP_057363"/>
    </isoform>
</comment>
<comment type="similarity">
    <text evidence="5">Belongs to the krueppel C2H2-type zinc-finger protein family.</text>
</comment>
<keyword id="KW-0025">Alternative splicing</keyword>
<keyword id="KW-0479">Metal-binding</keyword>
<keyword id="KW-0539">Nucleus</keyword>
<keyword id="KW-1185">Reference proteome</keyword>
<keyword id="KW-0677">Repeat</keyword>
<keyword id="KW-0678">Repressor</keyword>
<keyword id="KW-0804">Transcription</keyword>
<keyword id="KW-0805">Transcription regulation</keyword>
<keyword id="KW-0862">Zinc</keyword>
<keyword id="KW-0863">Zinc-finger</keyword>
<organism>
    <name type="scientific">Mus musculus</name>
    <name type="common">Mouse</name>
    <dbReference type="NCBI Taxonomy" id="10090"/>
    <lineage>
        <taxon>Eukaryota</taxon>
        <taxon>Metazoa</taxon>
        <taxon>Chordata</taxon>
        <taxon>Craniata</taxon>
        <taxon>Vertebrata</taxon>
        <taxon>Euteleostomi</taxon>
        <taxon>Mammalia</taxon>
        <taxon>Eutheria</taxon>
        <taxon>Euarchontoglires</taxon>
        <taxon>Glires</taxon>
        <taxon>Rodentia</taxon>
        <taxon>Myomorpha</taxon>
        <taxon>Muroidea</taxon>
        <taxon>Muridae</taxon>
        <taxon>Murinae</taxon>
        <taxon>Mus</taxon>
        <taxon>Mus</taxon>
    </lineage>
</organism>
<accession>G3X9G7</accession>
<accession>Q4KL58</accession>
<accession>Q8BIJ2</accession>
<dbReference type="EMBL" id="AK049344">
    <property type="protein sequence ID" value="BAC33696.1"/>
    <property type="molecule type" value="mRNA"/>
</dbReference>
<dbReference type="EMBL" id="AC159308">
    <property type="status" value="NOT_ANNOTATED_CDS"/>
    <property type="molecule type" value="Genomic_DNA"/>
</dbReference>
<dbReference type="EMBL" id="CH466522">
    <property type="protein sequence ID" value="EDL25266.1"/>
    <property type="molecule type" value="Genomic_DNA"/>
</dbReference>
<dbReference type="EMBL" id="BC099418">
    <property type="protein sequence ID" value="AAH99418.1"/>
    <property type="molecule type" value="mRNA"/>
</dbReference>
<dbReference type="CCDS" id="CCDS40560.1">
    <molecule id="G3X9G7-1"/>
</dbReference>
<dbReference type="CCDS" id="CCDS90519.1">
    <molecule id="G3X9G7-2"/>
</dbReference>
<dbReference type="RefSeq" id="NP_001158096.1">
    <molecule id="G3X9G7-2"/>
    <property type="nucleotide sequence ID" value="NM_001164624.1"/>
</dbReference>
<dbReference type="RefSeq" id="NP_766351.3">
    <molecule id="G3X9G7-1"/>
    <property type="nucleotide sequence ID" value="NM_172763.3"/>
</dbReference>
<dbReference type="SASBDB" id="G3X9G7"/>
<dbReference type="SMR" id="G3X9G7"/>
<dbReference type="DIP" id="DIP-59749N"/>
<dbReference type="FunCoup" id="G3X9G7">
    <property type="interactions" value="549"/>
</dbReference>
<dbReference type="IntAct" id="G3X9G7">
    <property type="interactions" value="2"/>
</dbReference>
<dbReference type="STRING" id="10090.ENSMUSP00000072286"/>
<dbReference type="iPTMnet" id="G3X9G7"/>
<dbReference type="PhosphoSitePlus" id="G3X9G7"/>
<dbReference type="PaxDb" id="10090-ENSMUSP00000072286"/>
<dbReference type="PeptideAtlas" id="G3X9G7"/>
<dbReference type="ProteomicsDB" id="275094">
    <molecule id="G3X9G7-1"/>
</dbReference>
<dbReference type="ProteomicsDB" id="275095">
    <molecule id="G3X9G7-2"/>
</dbReference>
<dbReference type="Pumba" id="G3X9G7"/>
<dbReference type="DNASU" id="235047"/>
<dbReference type="Ensembl" id="ENSMUST00000072465.9">
    <molecule id="G3X9G7-1"/>
    <property type="protein sequence ID" value="ENSMUSP00000072286.8"/>
    <property type="gene ID" value="ENSMUSG00000057982.9"/>
</dbReference>
<dbReference type="Ensembl" id="ENSMUST00000215618.2">
    <molecule id="G3X9G7-2"/>
    <property type="protein sequence ID" value="ENSMUSP00000151180.2"/>
    <property type="gene ID" value="ENSMUSG00000057982.9"/>
</dbReference>
<dbReference type="GeneID" id="235047"/>
<dbReference type="KEGG" id="mmu:235047"/>
<dbReference type="UCSC" id="uc009oof.2">
    <molecule id="G3X9G7-2"/>
    <property type="organism name" value="mouse"/>
</dbReference>
<dbReference type="UCSC" id="uc009oog.2">
    <molecule id="G3X9G7-1"/>
    <property type="organism name" value="mouse"/>
</dbReference>
<dbReference type="AGR" id="MGI:2143362"/>
<dbReference type="CTD" id="235047"/>
<dbReference type="MGI" id="MGI:2143362">
    <property type="gene designation" value="Zfp809"/>
</dbReference>
<dbReference type="VEuPathDB" id="HostDB:ENSMUSG00000057982"/>
<dbReference type="eggNOG" id="KOG1721">
    <property type="taxonomic scope" value="Eukaryota"/>
</dbReference>
<dbReference type="GeneTree" id="ENSGT00940000153505"/>
<dbReference type="HOGENOM" id="CLU_002678_0_7_1"/>
<dbReference type="InParanoid" id="G3X9G7"/>
<dbReference type="OMA" id="KPAYLNI"/>
<dbReference type="OrthoDB" id="6077919at2759"/>
<dbReference type="PhylomeDB" id="G3X9G7"/>
<dbReference type="TreeFam" id="TF339585"/>
<dbReference type="BioGRID-ORCS" id="235047">
    <property type="hits" value="1 hit in 78 CRISPR screens"/>
</dbReference>
<dbReference type="PRO" id="PR:G3X9G7"/>
<dbReference type="Proteomes" id="UP000000589">
    <property type="component" value="Chromosome 9"/>
</dbReference>
<dbReference type="RNAct" id="G3X9G7">
    <property type="molecule type" value="protein"/>
</dbReference>
<dbReference type="Bgee" id="ENSMUSG00000057982">
    <property type="expression patterns" value="Expressed in otolith organ and 224 other cell types or tissues"/>
</dbReference>
<dbReference type="ExpressionAtlas" id="G3X9G7">
    <property type="expression patterns" value="baseline and differential"/>
</dbReference>
<dbReference type="GO" id="GO:0005654">
    <property type="term" value="C:nucleoplasm"/>
    <property type="evidence" value="ECO:0000304"/>
    <property type="project" value="Reactome"/>
</dbReference>
<dbReference type="GO" id="GO:0005634">
    <property type="term" value="C:nucleus"/>
    <property type="evidence" value="ECO:0000314"/>
    <property type="project" value="MGI"/>
</dbReference>
<dbReference type="GO" id="GO:0043565">
    <property type="term" value="F:sequence-specific DNA binding"/>
    <property type="evidence" value="ECO:0000314"/>
    <property type="project" value="MGI"/>
</dbReference>
<dbReference type="GO" id="GO:0008270">
    <property type="term" value="F:zinc ion binding"/>
    <property type="evidence" value="ECO:0007669"/>
    <property type="project" value="UniProtKB-KW"/>
</dbReference>
<dbReference type="GO" id="GO:0045087">
    <property type="term" value="P:innate immune response"/>
    <property type="evidence" value="ECO:0000314"/>
    <property type="project" value="MGI"/>
</dbReference>
<dbReference type="GO" id="GO:0045869">
    <property type="term" value="P:negative regulation of single stranded viral RNA replication via double stranded DNA intermediate"/>
    <property type="evidence" value="ECO:0000314"/>
    <property type="project" value="MGI"/>
</dbReference>
<dbReference type="GO" id="GO:0006355">
    <property type="term" value="P:regulation of DNA-templated transcription"/>
    <property type="evidence" value="ECO:0007669"/>
    <property type="project" value="InterPro"/>
</dbReference>
<dbReference type="CDD" id="cd07765">
    <property type="entry name" value="KRAB_A-box"/>
    <property type="match status" value="1"/>
</dbReference>
<dbReference type="FunFam" id="3.30.160.60:FF:004135">
    <property type="match status" value="1"/>
</dbReference>
<dbReference type="FunFam" id="3.30.160.60:FF:000139">
    <property type="entry name" value="zinc finger protein 1 homolog"/>
    <property type="match status" value="1"/>
</dbReference>
<dbReference type="FunFam" id="3.30.160.60:FF:001498">
    <property type="entry name" value="Zinc finger protein 404"/>
    <property type="match status" value="1"/>
</dbReference>
<dbReference type="FunFam" id="3.30.160.60:FF:001232">
    <property type="entry name" value="zinc finger protein 62 homolog isoform X1"/>
    <property type="match status" value="1"/>
</dbReference>
<dbReference type="FunFam" id="3.30.160.60:FF:000710">
    <property type="entry name" value="Zinc finger protein 768"/>
    <property type="match status" value="1"/>
</dbReference>
<dbReference type="FunFam" id="3.30.160.60:FF:001011">
    <property type="entry name" value="Zinc finger protein 793"/>
    <property type="match status" value="1"/>
</dbReference>
<dbReference type="Gene3D" id="6.10.140.140">
    <property type="match status" value="1"/>
</dbReference>
<dbReference type="Gene3D" id="3.30.160.60">
    <property type="entry name" value="Classic Zinc Finger"/>
    <property type="match status" value="7"/>
</dbReference>
<dbReference type="InterPro" id="IPR001909">
    <property type="entry name" value="KRAB"/>
</dbReference>
<dbReference type="InterPro" id="IPR036051">
    <property type="entry name" value="KRAB_dom_sf"/>
</dbReference>
<dbReference type="InterPro" id="IPR036236">
    <property type="entry name" value="Znf_C2H2_sf"/>
</dbReference>
<dbReference type="InterPro" id="IPR013087">
    <property type="entry name" value="Znf_C2H2_type"/>
</dbReference>
<dbReference type="PANTHER" id="PTHR24390">
    <property type="entry name" value="ZINC FINGER PROTEIN"/>
    <property type="match status" value="1"/>
</dbReference>
<dbReference type="PANTHER" id="PTHR24390:SF264">
    <property type="entry name" value="ZINC FINGER PROTEIN ZFP2"/>
    <property type="match status" value="1"/>
</dbReference>
<dbReference type="Pfam" id="PF01352">
    <property type="entry name" value="KRAB"/>
    <property type="match status" value="1"/>
</dbReference>
<dbReference type="Pfam" id="PF00096">
    <property type="entry name" value="zf-C2H2"/>
    <property type="match status" value="6"/>
</dbReference>
<dbReference type="SMART" id="SM00349">
    <property type="entry name" value="KRAB"/>
    <property type="match status" value="1"/>
</dbReference>
<dbReference type="SMART" id="SM00355">
    <property type="entry name" value="ZnF_C2H2"/>
    <property type="match status" value="7"/>
</dbReference>
<dbReference type="SUPFAM" id="SSF57667">
    <property type="entry name" value="beta-beta-alpha zinc fingers"/>
    <property type="match status" value="4"/>
</dbReference>
<dbReference type="SUPFAM" id="SSF109640">
    <property type="entry name" value="KRAB domain (Kruppel-associated box)"/>
    <property type="match status" value="1"/>
</dbReference>
<dbReference type="PROSITE" id="PS50805">
    <property type="entry name" value="KRAB"/>
    <property type="match status" value="1"/>
</dbReference>
<dbReference type="PROSITE" id="PS00028">
    <property type="entry name" value="ZINC_FINGER_C2H2_1"/>
    <property type="match status" value="7"/>
</dbReference>
<dbReference type="PROSITE" id="PS50157">
    <property type="entry name" value="ZINC_FINGER_C2H2_2"/>
    <property type="match status" value="7"/>
</dbReference>
<gene>
    <name evidence="8" type="primary">Zfp809</name>
</gene>
<evidence type="ECO:0000255" key="1">
    <source>
        <dbReference type="PROSITE-ProRule" id="PRU00042"/>
    </source>
</evidence>
<evidence type="ECO:0000255" key="2">
    <source>
        <dbReference type="PROSITE-ProRule" id="PRU00119"/>
    </source>
</evidence>
<evidence type="ECO:0000256" key="3">
    <source>
        <dbReference type="SAM" id="MobiDB-lite"/>
    </source>
</evidence>
<evidence type="ECO:0000269" key="4">
    <source>
    </source>
</evidence>
<evidence type="ECO:0000305" key="5"/>
<evidence type="ECO:0000312" key="6">
    <source>
        <dbReference type="EMBL" id="AAH99418.1"/>
    </source>
</evidence>
<evidence type="ECO:0000312" key="7">
    <source>
        <dbReference type="EMBL" id="BAC33696.1"/>
    </source>
</evidence>
<evidence type="ECO:0000312" key="8">
    <source>
        <dbReference type="MGI" id="MGI:2143362"/>
    </source>
</evidence>
<name>ZN809_MOUSE</name>
<proteinExistence type="evidence at transcript level"/>
<sequence length="402" mass="46942">MGLVSFEDVAVDFTLEEWQDLDAAQRTLYRDVMLETYSSLVFLDPCIAKPKLIFNLERGFGPWSLAEASSRSLPGVHNVSTLSDTSKKIPKTRLRQLRKTNQKTPSEDTIEAELKARQEVSKGTTSRHRRAPVKSLCRKSQRTKNQTSYNDGNLYECKDCEKVFCNNSTLIKHYRRTHNVYKPYECDECSKMYYWKSDLTSHQKTHRQRKRIYECSECGKAFFRKSHLNAHERTHSGEKPYECTECRKAFYYKSDLTRHKKTHLGEKPFKCEECKKAFSRKSKLAIHQKKHTGEKPYECTECKKAFSHQSQLTAHRIAHSSENPYECKECNKSFHWKCQLTAHQKRHTGVTYFQEVVFQQITVSDWTGNLSENGPHRPTWTWAYGIMDFVKAWSRCIIGGGL</sequence>
<feature type="chain" id="PRO_0000431687" description="Zinc finger protein 809">
    <location>
        <begin position="1"/>
        <end position="402"/>
    </location>
</feature>
<feature type="domain" description="KRAB" evidence="2">
    <location>
        <begin position="4"/>
        <end position="75"/>
    </location>
</feature>
<feature type="zinc finger region" description="C2H2-type 1" evidence="1">
    <location>
        <begin position="155"/>
        <end position="178"/>
    </location>
</feature>
<feature type="zinc finger region" description="C2H2-type 2" evidence="1">
    <location>
        <begin position="184"/>
        <end position="206"/>
    </location>
</feature>
<feature type="zinc finger region" description="C2H2-type 3" evidence="1">
    <location>
        <begin position="213"/>
        <end position="235"/>
    </location>
</feature>
<feature type="zinc finger region" description="C2H2-type 4" evidence="1">
    <location>
        <begin position="241"/>
        <end position="263"/>
    </location>
</feature>
<feature type="zinc finger region" description="C2H2-type 5" evidence="1">
    <location>
        <begin position="269"/>
        <end position="291"/>
    </location>
</feature>
<feature type="zinc finger region" description="C2H2-type 6" evidence="1">
    <location>
        <begin position="297"/>
        <end position="319"/>
    </location>
</feature>
<feature type="zinc finger region" description="C2H2-type 7" evidence="1">
    <location>
        <begin position="325"/>
        <end position="347"/>
    </location>
</feature>
<feature type="region of interest" description="Disordered" evidence="3">
    <location>
        <begin position="118"/>
        <end position="139"/>
    </location>
</feature>
<feature type="compositionally biased region" description="Basic residues" evidence="3">
    <location>
        <begin position="125"/>
        <end position="139"/>
    </location>
</feature>
<feature type="splice variant" id="VSP_057362" description="In isoform 2.">
    <original>VTYFQ</original>
    <variation>QYGDS</variation>
    <location>
        <begin position="350"/>
        <end position="354"/>
    </location>
</feature>
<feature type="splice variant" id="VSP_057363" description="In isoform 2.">
    <location>
        <begin position="355"/>
        <end position="402"/>
    </location>
</feature>
<feature type="sequence conflict" description="In Ref. 4; AAH99418." ref="4">
    <original>Q</original>
    <variation>R</variation>
    <location>
        <position position="141"/>
    </location>
</feature>
<protein>
    <recommendedName>
        <fullName evidence="5">Zinc finger protein 809</fullName>
    </recommendedName>
</protein>
<reference key="1">
    <citation type="journal article" date="2005" name="Science">
        <title>The transcriptional landscape of the mammalian genome.</title>
        <authorList>
            <person name="Carninci P."/>
            <person name="Kasukawa T."/>
            <person name="Katayama S."/>
            <person name="Gough J."/>
            <person name="Frith M.C."/>
            <person name="Maeda N."/>
            <person name="Oyama R."/>
            <person name="Ravasi T."/>
            <person name="Lenhard B."/>
            <person name="Wells C."/>
            <person name="Kodzius R."/>
            <person name="Shimokawa K."/>
            <person name="Bajic V.B."/>
            <person name="Brenner S.E."/>
            <person name="Batalov S."/>
            <person name="Forrest A.R."/>
            <person name="Zavolan M."/>
            <person name="Davis M.J."/>
            <person name="Wilming L.G."/>
            <person name="Aidinis V."/>
            <person name="Allen J.E."/>
            <person name="Ambesi-Impiombato A."/>
            <person name="Apweiler R."/>
            <person name="Aturaliya R.N."/>
            <person name="Bailey T.L."/>
            <person name="Bansal M."/>
            <person name="Baxter L."/>
            <person name="Beisel K.W."/>
            <person name="Bersano T."/>
            <person name="Bono H."/>
            <person name="Chalk A.M."/>
            <person name="Chiu K.P."/>
            <person name="Choudhary V."/>
            <person name="Christoffels A."/>
            <person name="Clutterbuck D.R."/>
            <person name="Crowe M.L."/>
            <person name="Dalla E."/>
            <person name="Dalrymple B.P."/>
            <person name="de Bono B."/>
            <person name="Della Gatta G."/>
            <person name="di Bernardo D."/>
            <person name="Down T."/>
            <person name="Engstrom P."/>
            <person name="Fagiolini M."/>
            <person name="Faulkner G."/>
            <person name="Fletcher C.F."/>
            <person name="Fukushima T."/>
            <person name="Furuno M."/>
            <person name="Futaki S."/>
            <person name="Gariboldi M."/>
            <person name="Georgii-Hemming P."/>
            <person name="Gingeras T.R."/>
            <person name="Gojobori T."/>
            <person name="Green R.E."/>
            <person name="Gustincich S."/>
            <person name="Harbers M."/>
            <person name="Hayashi Y."/>
            <person name="Hensch T.K."/>
            <person name="Hirokawa N."/>
            <person name="Hill D."/>
            <person name="Huminiecki L."/>
            <person name="Iacono M."/>
            <person name="Ikeo K."/>
            <person name="Iwama A."/>
            <person name="Ishikawa T."/>
            <person name="Jakt M."/>
            <person name="Kanapin A."/>
            <person name="Katoh M."/>
            <person name="Kawasawa Y."/>
            <person name="Kelso J."/>
            <person name="Kitamura H."/>
            <person name="Kitano H."/>
            <person name="Kollias G."/>
            <person name="Krishnan S.P."/>
            <person name="Kruger A."/>
            <person name="Kummerfeld S.K."/>
            <person name="Kurochkin I.V."/>
            <person name="Lareau L.F."/>
            <person name="Lazarevic D."/>
            <person name="Lipovich L."/>
            <person name="Liu J."/>
            <person name="Liuni S."/>
            <person name="McWilliam S."/>
            <person name="Madan Babu M."/>
            <person name="Madera M."/>
            <person name="Marchionni L."/>
            <person name="Matsuda H."/>
            <person name="Matsuzawa S."/>
            <person name="Miki H."/>
            <person name="Mignone F."/>
            <person name="Miyake S."/>
            <person name="Morris K."/>
            <person name="Mottagui-Tabar S."/>
            <person name="Mulder N."/>
            <person name="Nakano N."/>
            <person name="Nakauchi H."/>
            <person name="Ng P."/>
            <person name="Nilsson R."/>
            <person name="Nishiguchi S."/>
            <person name="Nishikawa S."/>
            <person name="Nori F."/>
            <person name="Ohara O."/>
            <person name="Okazaki Y."/>
            <person name="Orlando V."/>
            <person name="Pang K.C."/>
            <person name="Pavan W.J."/>
            <person name="Pavesi G."/>
            <person name="Pesole G."/>
            <person name="Petrovsky N."/>
            <person name="Piazza S."/>
            <person name="Reed J."/>
            <person name="Reid J.F."/>
            <person name="Ring B.Z."/>
            <person name="Ringwald M."/>
            <person name="Rost B."/>
            <person name="Ruan Y."/>
            <person name="Salzberg S.L."/>
            <person name="Sandelin A."/>
            <person name="Schneider C."/>
            <person name="Schoenbach C."/>
            <person name="Sekiguchi K."/>
            <person name="Semple C.A."/>
            <person name="Seno S."/>
            <person name="Sessa L."/>
            <person name="Sheng Y."/>
            <person name="Shibata Y."/>
            <person name="Shimada H."/>
            <person name="Shimada K."/>
            <person name="Silva D."/>
            <person name="Sinclair B."/>
            <person name="Sperling S."/>
            <person name="Stupka E."/>
            <person name="Sugiura K."/>
            <person name="Sultana R."/>
            <person name="Takenaka Y."/>
            <person name="Taki K."/>
            <person name="Tammoja K."/>
            <person name="Tan S.L."/>
            <person name="Tang S."/>
            <person name="Taylor M.S."/>
            <person name="Tegner J."/>
            <person name="Teichmann S.A."/>
            <person name="Ueda H.R."/>
            <person name="van Nimwegen E."/>
            <person name="Verardo R."/>
            <person name="Wei C.L."/>
            <person name="Yagi K."/>
            <person name="Yamanishi H."/>
            <person name="Zabarovsky E."/>
            <person name="Zhu S."/>
            <person name="Zimmer A."/>
            <person name="Hide W."/>
            <person name="Bult C."/>
            <person name="Grimmond S.M."/>
            <person name="Teasdale R.D."/>
            <person name="Liu E.T."/>
            <person name="Brusic V."/>
            <person name="Quackenbush J."/>
            <person name="Wahlestedt C."/>
            <person name="Mattick J.S."/>
            <person name="Hume D.A."/>
            <person name="Kai C."/>
            <person name="Sasaki D."/>
            <person name="Tomaru Y."/>
            <person name="Fukuda S."/>
            <person name="Kanamori-Katayama M."/>
            <person name="Suzuki M."/>
            <person name="Aoki J."/>
            <person name="Arakawa T."/>
            <person name="Iida J."/>
            <person name="Imamura K."/>
            <person name="Itoh M."/>
            <person name="Kato T."/>
            <person name="Kawaji H."/>
            <person name="Kawagashira N."/>
            <person name="Kawashima T."/>
            <person name="Kojima M."/>
            <person name="Kondo S."/>
            <person name="Konno H."/>
            <person name="Nakano K."/>
            <person name="Ninomiya N."/>
            <person name="Nishio T."/>
            <person name="Okada M."/>
            <person name="Plessy C."/>
            <person name="Shibata K."/>
            <person name="Shiraki T."/>
            <person name="Suzuki S."/>
            <person name="Tagami M."/>
            <person name="Waki K."/>
            <person name="Watahiki A."/>
            <person name="Okamura-Oho Y."/>
            <person name="Suzuki H."/>
            <person name="Kawai J."/>
            <person name="Hayashizaki Y."/>
        </authorList>
    </citation>
    <scope>NUCLEOTIDE SEQUENCE [LARGE SCALE MRNA] (ISOFORM 2)</scope>
    <source>
        <strain evidence="7">C57BL/6J</strain>
    </source>
</reference>
<reference key="2">
    <citation type="journal article" date="2009" name="PLoS Biol.">
        <title>Lineage-specific biology revealed by a finished genome assembly of the mouse.</title>
        <authorList>
            <person name="Church D.M."/>
            <person name="Goodstadt L."/>
            <person name="Hillier L.W."/>
            <person name="Zody M.C."/>
            <person name="Goldstein S."/>
            <person name="She X."/>
            <person name="Bult C.J."/>
            <person name="Agarwala R."/>
            <person name="Cherry J.L."/>
            <person name="DiCuccio M."/>
            <person name="Hlavina W."/>
            <person name="Kapustin Y."/>
            <person name="Meric P."/>
            <person name="Maglott D."/>
            <person name="Birtle Z."/>
            <person name="Marques A.C."/>
            <person name="Graves T."/>
            <person name="Zhou S."/>
            <person name="Teague B."/>
            <person name="Potamousis K."/>
            <person name="Churas C."/>
            <person name="Place M."/>
            <person name="Herschleb J."/>
            <person name="Runnheim R."/>
            <person name="Forrest D."/>
            <person name="Amos-Landgraf J."/>
            <person name="Schwartz D.C."/>
            <person name="Cheng Z."/>
            <person name="Lindblad-Toh K."/>
            <person name="Eichler E.E."/>
            <person name="Ponting C.P."/>
        </authorList>
    </citation>
    <scope>NUCLEOTIDE SEQUENCE [LARGE SCALE GENOMIC DNA]</scope>
    <source>
        <strain>C57BL/6J</strain>
    </source>
</reference>
<reference key="3">
    <citation type="submission" date="2005-07" db="EMBL/GenBank/DDBJ databases">
        <authorList>
            <person name="Mural R.J."/>
            <person name="Adams M.D."/>
            <person name="Myers E.W."/>
            <person name="Smith H.O."/>
            <person name="Venter J.C."/>
        </authorList>
    </citation>
    <scope>NUCLEOTIDE SEQUENCE [LARGE SCALE GENOMIC DNA]</scope>
</reference>
<reference key="4">
    <citation type="journal article" date="2004" name="Genome Res.">
        <title>The status, quality, and expansion of the NIH full-length cDNA project: the Mammalian Gene Collection (MGC).</title>
        <authorList>
            <consortium name="The MGC Project Team"/>
        </authorList>
    </citation>
    <scope>NUCLEOTIDE SEQUENCE [LARGE SCALE MRNA] (ISOFORM 1)</scope>
    <source>
        <tissue evidence="6">Placenta</tissue>
    </source>
</reference>
<reference key="5">
    <citation type="journal article" date="2009" name="Nature">
        <title>Embryonic stem cells use ZFP809 to silence retroviral DNAs.</title>
        <authorList>
            <person name="Wolf D."/>
            <person name="Goff S.P."/>
        </authorList>
    </citation>
    <scope>FUNCTION</scope>
</reference>